<proteinExistence type="inferred from homology"/>
<sequence length="139" mass="15790">MRIMGLDVGSKTVGVAISDPLGFTAQGLEIIKIDEEKAEFGFTRLEELVKQYQVEQFVIGLPKNMNNTNSPRVDASITYGNHIEHLFGLPVHYQDERLTTVEAERMLIEQADISRGKRKKVIDKLAAQLILQNYLNRNF</sequence>
<organism>
    <name type="scientific">Streptococcus pyogenes serotype M2 (strain MGAS10270)</name>
    <dbReference type="NCBI Taxonomy" id="370552"/>
    <lineage>
        <taxon>Bacteria</taxon>
        <taxon>Bacillati</taxon>
        <taxon>Bacillota</taxon>
        <taxon>Bacilli</taxon>
        <taxon>Lactobacillales</taxon>
        <taxon>Streptococcaceae</taxon>
        <taxon>Streptococcus</taxon>
    </lineage>
</organism>
<keyword id="KW-0963">Cytoplasm</keyword>
<keyword id="KW-0378">Hydrolase</keyword>
<keyword id="KW-0540">Nuclease</keyword>
<keyword id="KW-0690">Ribosome biogenesis</keyword>
<accession>Q1JEI0</accession>
<dbReference type="EC" id="3.1.-.-" evidence="1"/>
<dbReference type="EMBL" id="CP000260">
    <property type="protein sequence ID" value="ABF34929.1"/>
    <property type="molecule type" value="Genomic_DNA"/>
</dbReference>
<dbReference type="SMR" id="Q1JEI0"/>
<dbReference type="KEGG" id="sph:MGAS10270_Spy1864"/>
<dbReference type="HOGENOM" id="CLU_098240_2_0_9"/>
<dbReference type="Proteomes" id="UP000002436">
    <property type="component" value="Chromosome"/>
</dbReference>
<dbReference type="GO" id="GO:0005829">
    <property type="term" value="C:cytosol"/>
    <property type="evidence" value="ECO:0007669"/>
    <property type="project" value="TreeGrafter"/>
</dbReference>
<dbReference type="GO" id="GO:0004518">
    <property type="term" value="F:nuclease activity"/>
    <property type="evidence" value="ECO:0007669"/>
    <property type="project" value="UniProtKB-KW"/>
</dbReference>
<dbReference type="GO" id="GO:0000967">
    <property type="term" value="P:rRNA 5'-end processing"/>
    <property type="evidence" value="ECO:0007669"/>
    <property type="project" value="UniProtKB-UniRule"/>
</dbReference>
<dbReference type="CDD" id="cd16964">
    <property type="entry name" value="YqgF"/>
    <property type="match status" value="1"/>
</dbReference>
<dbReference type="FunFam" id="3.30.420.140:FF:000003">
    <property type="entry name" value="Putative pre-16S rRNA nuclease"/>
    <property type="match status" value="1"/>
</dbReference>
<dbReference type="Gene3D" id="3.30.420.140">
    <property type="entry name" value="YqgF/RNase H-like domain"/>
    <property type="match status" value="1"/>
</dbReference>
<dbReference type="HAMAP" id="MF_00651">
    <property type="entry name" value="Nuclease_YqgF"/>
    <property type="match status" value="1"/>
</dbReference>
<dbReference type="InterPro" id="IPR012337">
    <property type="entry name" value="RNaseH-like_sf"/>
</dbReference>
<dbReference type="InterPro" id="IPR005227">
    <property type="entry name" value="YqgF"/>
</dbReference>
<dbReference type="InterPro" id="IPR006641">
    <property type="entry name" value="YqgF/RNaseH-like_dom"/>
</dbReference>
<dbReference type="InterPro" id="IPR037027">
    <property type="entry name" value="YqgF/RNaseH-like_dom_sf"/>
</dbReference>
<dbReference type="NCBIfam" id="TIGR00250">
    <property type="entry name" value="RNAse_H_YqgF"/>
    <property type="match status" value="1"/>
</dbReference>
<dbReference type="PANTHER" id="PTHR33317">
    <property type="entry name" value="POLYNUCLEOTIDYL TRANSFERASE, RIBONUCLEASE H-LIKE SUPERFAMILY PROTEIN"/>
    <property type="match status" value="1"/>
</dbReference>
<dbReference type="PANTHER" id="PTHR33317:SF4">
    <property type="entry name" value="POLYNUCLEOTIDYL TRANSFERASE, RIBONUCLEASE H-LIKE SUPERFAMILY PROTEIN"/>
    <property type="match status" value="1"/>
</dbReference>
<dbReference type="Pfam" id="PF03652">
    <property type="entry name" value="RuvX"/>
    <property type="match status" value="1"/>
</dbReference>
<dbReference type="SMART" id="SM00732">
    <property type="entry name" value="YqgFc"/>
    <property type="match status" value="1"/>
</dbReference>
<dbReference type="SUPFAM" id="SSF53098">
    <property type="entry name" value="Ribonuclease H-like"/>
    <property type="match status" value="1"/>
</dbReference>
<evidence type="ECO:0000255" key="1">
    <source>
        <dbReference type="HAMAP-Rule" id="MF_00651"/>
    </source>
</evidence>
<feature type="chain" id="PRO_0000257602" description="Putative pre-16S rRNA nuclease">
    <location>
        <begin position="1"/>
        <end position="139"/>
    </location>
</feature>
<gene>
    <name type="ordered locus">MGAS10270_Spy1864</name>
</gene>
<comment type="function">
    <text evidence="1">Could be a nuclease involved in processing of the 5'-end of pre-16S rRNA.</text>
</comment>
<comment type="subcellular location">
    <subcellularLocation>
        <location evidence="1">Cytoplasm</location>
    </subcellularLocation>
</comment>
<comment type="similarity">
    <text evidence="1">Belongs to the YqgF nuclease family.</text>
</comment>
<reference key="1">
    <citation type="journal article" date="2006" name="Proc. Natl. Acad. Sci. U.S.A.">
        <title>Molecular genetic anatomy of inter- and intraserotype variation in the human bacterial pathogen group A Streptococcus.</title>
        <authorList>
            <person name="Beres S.B."/>
            <person name="Richter E.W."/>
            <person name="Nagiec M.J."/>
            <person name="Sumby P."/>
            <person name="Porcella S.F."/>
            <person name="DeLeo F.R."/>
            <person name="Musser J.M."/>
        </authorList>
    </citation>
    <scope>NUCLEOTIDE SEQUENCE [LARGE SCALE GENOMIC DNA]</scope>
    <source>
        <strain>MGAS10270</strain>
    </source>
</reference>
<protein>
    <recommendedName>
        <fullName evidence="1">Putative pre-16S rRNA nuclease</fullName>
        <ecNumber evidence="1">3.1.-.-</ecNumber>
    </recommendedName>
</protein>
<name>YQGF_STRPD</name>